<comment type="function">
    <text evidence="1">Catalyzes the reductive methylation of 2'-deoxyuridine-5'-monophosphate (dUMP) to 2'-deoxythymidine-5'-monophosphate (dTMP) while utilizing 5,10-methylenetetrahydrofolate (mTHF) as the methyl donor and reductant in the reaction, yielding dihydrofolate (DHF) as a by-product. This enzymatic reaction provides an intracellular de novo source of dTMP, an essential precursor for DNA biosynthesis.</text>
</comment>
<comment type="catalytic activity">
    <reaction evidence="1">
        <text>dUMP + (6R)-5,10-methylene-5,6,7,8-tetrahydrofolate = 7,8-dihydrofolate + dTMP</text>
        <dbReference type="Rhea" id="RHEA:12104"/>
        <dbReference type="ChEBI" id="CHEBI:15636"/>
        <dbReference type="ChEBI" id="CHEBI:57451"/>
        <dbReference type="ChEBI" id="CHEBI:63528"/>
        <dbReference type="ChEBI" id="CHEBI:246422"/>
        <dbReference type="EC" id="2.1.1.45"/>
    </reaction>
</comment>
<comment type="pathway">
    <text evidence="1">Pyrimidine metabolism; dTTP biosynthesis.</text>
</comment>
<comment type="subunit">
    <text evidence="1">Homodimer.</text>
</comment>
<comment type="subcellular location">
    <subcellularLocation>
        <location evidence="1">Cytoplasm</location>
    </subcellularLocation>
</comment>
<comment type="similarity">
    <text evidence="1">Belongs to the thymidylate synthase family. Bacterial-type ThyA subfamily.</text>
</comment>
<feature type="chain" id="PRO_1000197251" description="Thymidylate synthase">
    <location>
        <begin position="1"/>
        <end position="264"/>
    </location>
</feature>
<feature type="active site" description="Nucleophile" evidence="1">
    <location>
        <position position="146"/>
    </location>
</feature>
<feature type="binding site" description="in other chain" evidence="1">
    <location>
        <position position="21"/>
    </location>
    <ligand>
        <name>dUMP</name>
        <dbReference type="ChEBI" id="CHEBI:246422"/>
        <note>ligand shared between dimeric partners</note>
    </ligand>
</feature>
<feature type="binding site" evidence="1">
    <location>
        <position position="51"/>
    </location>
    <ligand>
        <name>(6R)-5,10-methylene-5,6,7,8-tetrahydrofolate</name>
        <dbReference type="ChEBI" id="CHEBI:15636"/>
    </ligand>
</feature>
<feature type="binding site" evidence="1">
    <location>
        <begin position="126"/>
        <end position="127"/>
    </location>
    <ligand>
        <name>dUMP</name>
        <dbReference type="ChEBI" id="CHEBI:246422"/>
        <note>ligand shared between dimeric partners</note>
    </ligand>
</feature>
<feature type="binding site" description="in other chain" evidence="1">
    <location>
        <begin position="166"/>
        <end position="169"/>
    </location>
    <ligand>
        <name>dUMP</name>
        <dbReference type="ChEBI" id="CHEBI:246422"/>
        <note>ligand shared between dimeric partners</note>
    </ligand>
</feature>
<feature type="binding site" evidence="1">
    <location>
        <position position="169"/>
    </location>
    <ligand>
        <name>(6R)-5,10-methylene-5,6,7,8-tetrahydrofolate</name>
        <dbReference type="ChEBI" id="CHEBI:15636"/>
    </ligand>
</feature>
<feature type="binding site" description="in other chain" evidence="1">
    <location>
        <position position="177"/>
    </location>
    <ligand>
        <name>dUMP</name>
        <dbReference type="ChEBI" id="CHEBI:246422"/>
        <note>ligand shared between dimeric partners</note>
    </ligand>
</feature>
<feature type="binding site" description="in other chain" evidence="1">
    <location>
        <begin position="207"/>
        <end position="209"/>
    </location>
    <ligand>
        <name>dUMP</name>
        <dbReference type="ChEBI" id="CHEBI:246422"/>
        <note>ligand shared between dimeric partners</note>
    </ligand>
</feature>
<feature type="binding site" evidence="1">
    <location>
        <position position="263"/>
    </location>
    <ligand>
        <name>(6R)-5,10-methylene-5,6,7,8-tetrahydrofolate</name>
        <dbReference type="ChEBI" id="CHEBI:15636"/>
    </ligand>
</feature>
<accession>B7KQG2</accession>
<sequence>MRAYHDLLTRILSEGVRKEDRTGTGTLSVFGHQMRFDLADGFPLVTTKQLHLRSIIHELLWFLKGDTNVAYLKENGVTIWDEWADANGDLGPVYGKQWRSWAKPEGGTVDQIAWILDEIARNPDSRRLIVSAWNPADLDRMALAPCHCLFQFYVADGRLSCQLYQRSADAFLGVPFNIASYALLTAMMAQVTGLKAGDFVHTFGDAHLYANHLEQTHLQLSREPRPLPRLRLNPEVRSLFDFRFEDIVIEGYEPHPAIKAPVAV</sequence>
<gene>
    <name evidence="1" type="primary">thyA</name>
    <name type="ordered locus">Mchl_2887</name>
</gene>
<reference key="1">
    <citation type="submission" date="2008-12" db="EMBL/GenBank/DDBJ databases">
        <title>Complete sequence of chromosome of Methylobacterium chloromethanicum CM4.</title>
        <authorList>
            <consortium name="US DOE Joint Genome Institute"/>
            <person name="Lucas S."/>
            <person name="Copeland A."/>
            <person name="Lapidus A."/>
            <person name="Glavina del Rio T."/>
            <person name="Dalin E."/>
            <person name="Tice H."/>
            <person name="Bruce D."/>
            <person name="Goodwin L."/>
            <person name="Pitluck S."/>
            <person name="Chertkov O."/>
            <person name="Brettin T."/>
            <person name="Detter J.C."/>
            <person name="Han C."/>
            <person name="Larimer F."/>
            <person name="Land M."/>
            <person name="Hauser L."/>
            <person name="Kyrpides N."/>
            <person name="Mikhailova N."/>
            <person name="Marx C."/>
            <person name="Richardson P."/>
        </authorList>
    </citation>
    <scope>NUCLEOTIDE SEQUENCE [LARGE SCALE GENOMIC DNA]</scope>
    <source>
        <strain>CM4 / NCIMB 13688</strain>
    </source>
</reference>
<proteinExistence type="inferred from homology"/>
<name>TYSY_METC4</name>
<evidence type="ECO:0000255" key="1">
    <source>
        <dbReference type="HAMAP-Rule" id="MF_00008"/>
    </source>
</evidence>
<protein>
    <recommendedName>
        <fullName evidence="1">Thymidylate synthase</fullName>
        <shortName evidence="1">TS</shortName>
        <shortName evidence="1">TSase</shortName>
        <ecNumber evidence="1">2.1.1.45</ecNumber>
    </recommendedName>
</protein>
<dbReference type="EC" id="2.1.1.45" evidence="1"/>
<dbReference type="EMBL" id="CP001298">
    <property type="protein sequence ID" value="ACK83726.1"/>
    <property type="molecule type" value="Genomic_DNA"/>
</dbReference>
<dbReference type="RefSeq" id="WP_015951158.1">
    <property type="nucleotide sequence ID" value="NC_011757.1"/>
</dbReference>
<dbReference type="SMR" id="B7KQG2"/>
<dbReference type="KEGG" id="mch:Mchl_2887"/>
<dbReference type="HOGENOM" id="CLU_021669_0_0_5"/>
<dbReference type="UniPathway" id="UPA00575"/>
<dbReference type="Proteomes" id="UP000002385">
    <property type="component" value="Chromosome"/>
</dbReference>
<dbReference type="GO" id="GO:0005829">
    <property type="term" value="C:cytosol"/>
    <property type="evidence" value="ECO:0007669"/>
    <property type="project" value="TreeGrafter"/>
</dbReference>
<dbReference type="GO" id="GO:0004799">
    <property type="term" value="F:thymidylate synthase activity"/>
    <property type="evidence" value="ECO:0007669"/>
    <property type="project" value="UniProtKB-UniRule"/>
</dbReference>
<dbReference type="GO" id="GO:0006231">
    <property type="term" value="P:dTMP biosynthetic process"/>
    <property type="evidence" value="ECO:0007669"/>
    <property type="project" value="UniProtKB-UniRule"/>
</dbReference>
<dbReference type="GO" id="GO:0006235">
    <property type="term" value="P:dTTP biosynthetic process"/>
    <property type="evidence" value="ECO:0007669"/>
    <property type="project" value="UniProtKB-UniRule"/>
</dbReference>
<dbReference type="GO" id="GO:0032259">
    <property type="term" value="P:methylation"/>
    <property type="evidence" value="ECO:0007669"/>
    <property type="project" value="UniProtKB-KW"/>
</dbReference>
<dbReference type="CDD" id="cd00351">
    <property type="entry name" value="TS_Pyrimidine_HMase"/>
    <property type="match status" value="1"/>
</dbReference>
<dbReference type="FunFam" id="3.30.572.10:FF:000001">
    <property type="entry name" value="Thymidylate synthase"/>
    <property type="match status" value="1"/>
</dbReference>
<dbReference type="Gene3D" id="3.30.572.10">
    <property type="entry name" value="Thymidylate synthase/dCMP hydroxymethylase domain"/>
    <property type="match status" value="1"/>
</dbReference>
<dbReference type="HAMAP" id="MF_00008">
    <property type="entry name" value="Thymidy_synth_bact"/>
    <property type="match status" value="1"/>
</dbReference>
<dbReference type="InterPro" id="IPR045097">
    <property type="entry name" value="Thymidate_synth/dCMP_Mease"/>
</dbReference>
<dbReference type="InterPro" id="IPR023451">
    <property type="entry name" value="Thymidate_synth/dCMP_Mease_dom"/>
</dbReference>
<dbReference type="InterPro" id="IPR036926">
    <property type="entry name" value="Thymidate_synth/dCMP_Mease_sf"/>
</dbReference>
<dbReference type="InterPro" id="IPR000398">
    <property type="entry name" value="Thymidylate_synthase"/>
</dbReference>
<dbReference type="InterPro" id="IPR020940">
    <property type="entry name" value="Thymidylate_synthase_AS"/>
</dbReference>
<dbReference type="NCBIfam" id="NF002497">
    <property type="entry name" value="PRK01827.1-3"/>
    <property type="match status" value="1"/>
</dbReference>
<dbReference type="NCBIfam" id="NF002499">
    <property type="entry name" value="PRK01827.1-5"/>
    <property type="match status" value="1"/>
</dbReference>
<dbReference type="NCBIfam" id="TIGR03284">
    <property type="entry name" value="thym_sym"/>
    <property type="match status" value="2"/>
</dbReference>
<dbReference type="PANTHER" id="PTHR11548:SF9">
    <property type="entry name" value="THYMIDYLATE SYNTHASE"/>
    <property type="match status" value="1"/>
</dbReference>
<dbReference type="PANTHER" id="PTHR11548">
    <property type="entry name" value="THYMIDYLATE SYNTHASE 1"/>
    <property type="match status" value="1"/>
</dbReference>
<dbReference type="Pfam" id="PF00303">
    <property type="entry name" value="Thymidylat_synt"/>
    <property type="match status" value="1"/>
</dbReference>
<dbReference type="PRINTS" id="PR00108">
    <property type="entry name" value="THYMDSNTHASE"/>
</dbReference>
<dbReference type="SUPFAM" id="SSF55831">
    <property type="entry name" value="Thymidylate synthase/dCMP hydroxymethylase"/>
    <property type="match status" value="1"/>
</dbReference>
<dbReference type="PROSITE" id="PS00091">
    <property type="entry name" value="THYMIDYLATE_SYNTHASE"/>
    <property type="match status" value="1"/>
</dbReference>
<organism>
    <name type="scientific">Methylorubrum extorquens (strain CM4 / NCIMB 13688)</name>
    <name type="common">Methylobacterium extorquens</name>
    <dbReference type="NCBI Taxonomy" id="440085"/>
    <lineage>
        <taxon>Bacteria</taxon>
        <taxon>Pseudomonadati</taxon>
        <taxon>Pseudomonadota</taxon>
        <taxon>Alphaproteobacteria</taxon>
        <taxon>Hyphomicrobiales</taxon>
        <taxon>Methylobacteriaceae</taxon>
        <taxon>Methylorubrum</taxon>
    </lineage>
</organism>
<keyword id="KW-0963">Cytoplasm</keyword>
<keyword id="KW-0489">Methyltransferase</keyword>
<keyword id="KW-0545">Nucleotide biosynthesis</keyword>
<keyword id="KW-0808">Transferase</keyword>